<gene>
    <name evidence="1" type="primary">dnaA</name>
</gene>
<feature type="chain" id="PRO_0000114297" description="Chromosomal replication initiator protein DnaA">
    <location>
        <begin position="1"/>
        <end position="468"/>
    </location>
</feature>
<feature type="region of interest" description="Domain I, interacts with DnaA modulators" evidence="1">
    <location>
        <begin position="1"/>
        <end position="84"/>
    </location>
</feature>
<feature type="region of interest" description="Domain II" evidence="1">
    <location>
        <begin position="84"/>
        <end position="131"/>
    </location>
</feature>
<feature type="region of interest" description="Disordered" evidence="2">
    <location>
        <begin position="85"/>
        <end position="104"/>
    </location>
</feature>
<feature type="region of interest" description="Domain III, AAA+ region" evidence="1">
    <location>
        <begin position="132"/>
        <end position="348"/>
    </location>
</feature>
<feature type="region of interest" description="Domain IV, binds dsDNA" evidence="1">
    <location>
        <begin position="349"/>
        <end position="468"/>
    </location>
</feature>
<feature type="compositionally biased region" description="Low complexity" evidence="2">
    <location>
        <begin position="85"/>
        <end position="95"/>
    </location>
</feature>
<feature type="binding site" evidence="1">
    <location>
        <position position="176"/>
    </location>
    <ligand>
        <name>ATP</name>
        <dbReference type="ChEBI" id="CHEBI:30616"/>
    </ligand>
</feature>
<feature type="binding site" evidence="1">
    <location>
        <position position="178"/>
    </location>
    <ligand>
        <name>ATP</name>
        <dbReference type="ChEBI" id="CHEBI:30616"/>
    </ligand>
</feature>
<feature type="binding site" evidence="1">
    <location>
        <position position="179"/>
    </location>
    <ligand>
        <name>ATP</name>
        <dbReference type="ChEBI" id="CHEBI:30616"/>
    </ligand>
</feature>
<feature type="binding site" evidence="1">
    <location>
        <position position="180"/>
    </location>
    <ligand>
        <name>ATP</name>
        <dbReference type="ChEBI" id="CHEBI:30616"/>
    </ligand>
</feature>
<evidence type="ECO:0000255" key="1">
    <source>
        <dbReference type="HAMAP-Rule" id="MF_00377"/>
    </source>
</evidence>
<evidence type="ECO:0000256" key="2">
    <source>
        <dbReference type="SAM" id="MobiDB-lite"/>
    </source>
</evidence>
<evidence type="ECO:0000269" key="3">
    <source>
    </source>
</evidence>
<organism>
    <name type="scientific">Vibrio harveyi</name>
    <name type="common">Beneckea harveyi</name>
    <dbReference type="NCBI Taxonomy" id="669"/>
    <lineage>
        <taxon>Bacteria</taxon>
        <taxon>Pseudomonadati</taxon>
        <taxon>Pseudomonadota</taxon>
        <taxon>Gammaproteobacteria</taxon>
        <taxon>Vibrionales</taxon>
        <taxon>Vibrionaceae</taxon>
        <taxon>Vibrio</taxon>
    </lineage>
</organism>
<proteinExistence type="evidence at transcript level"/>
<dbReference type="EMBL" id="L47617">
    <property type="protein sequence ID" value="AAA78257.1"/>
    <property type="molecule type" value="Genomic_DNA"/>
</dbReference>
<dbReference type="RefSeq" id="WP_005451061.1">
    <property type="nucleotide sequence ID" value="NZ_AP031614.1"/>
</dbReference>
<dbReference type="SMR" id="P49996"/>
<dbReference type="STRING" id="669.AL538_09690"/>
<dbReference type="GeneID" id="83583389"/>
<dbReference type="OrthoDB" id="9807019at2"/>
<dbReference type="GO" id="GO:0005737">
    <property type="term" value="C:cytoplasm"/>
    <property type="evidence" value="ECO:0007669"/>
    <property type="project" value="UniProtKB-SubCell"/>
</dbReference>
<dbReference type="GO" id="GO:0005886">
    <property type="term" value="C:plasma membrane"/>
    <property type="evidence" value="ECO:0007669"/>
    <property type="project" value="TreeGrafter"/>
</dbReference>
<dbReference type="GO" id="GO:0005524">
    <property type="term" value="F:ATP binding"/>
    <property type="evidence" value="ECO:0007669"/>
    <property type="project" value="UniProtKB-UniRule"/>
</dbReference>
<dbReference type="GO" id="GO:0016887">
    <property type="term" value="F:ATP hydrolysis activity"/>
    <property type="evidence" value="ECO:0007669"/>
    <property type="project" value="InterPro"/>
</dbReference>
<dbReference type="GO" id="GO:0003688">
    <property type="term" value="F:DNA replication origin binding"/>
    <property type="evidence" value="ECO:0007669"/>
    <property type="project" value="UniProtKB-UniRule"/>
</dbReference>
<dbReference type="GO" id="GO:0008289">
    <property type="term" value="F:lipid binding"/>
    <property type="evidence" value="ECO:0007669"/>
    <property type="project" value="UniProtKB-KW"/>
</dbReference>
<dbReference type="GO" id="GO:0006270">
    <property type="term" value="P:DNA replication initiation"/>
    <property type="evidence" value="ECO:0007669"/>
    <property type="project" value="UniProtKB-UniRule"/>
</dbReference>
<dbReference type="GO" id="GO:0006275">
    <property type="term" value="P:regulation of DNA replication"/>
    <property type="evidence" value="ECO:0007669"/>
    <property type="project" value="UniProtKB-UniRule"/>
</dbReference>
<dbReference type="CDD" id="cd00009">
    <property type="entry name" value="AAA"/>
    <property type="match status" value="1"/>
</dbReference>
<dbReference type="CDD" id="cd06571">
    <property type="entry name" value="Bac_DnaA_C"/>
    <property type="match status" value="1"/>
</dbReference>
<dbReference type="FunFam" id="1.10.1750.10:FF:000001">
    <property type="entry name" value="Chromosomal replication initiator protein DnaA"/>
    <property type="match status" value="1"/>
</dbReference>
<dbReference type="FunFam" id="1.10.8.60:FF:000003">
    <property type="entry name" value="Chromosomal replication initiator protein DnaA"/>
    <property type="match status" value="1"/>
</dbReference>
<dbReference type="FunFam" id="3.30.300.180:FF:000001">
    <property type="entry name" value="Chromosomal replication initiator protein DnaA"/>
    <property type="match status" value="1"/>
</dbReference>
<dbReference type="FunFam" id="3.40.50.300:FF:000103">
    <property type="entry name" value="Chromosomal replication initiator protein DnaA"/>
    <property type="match status" value="1"/>
</dbReference>
<dbReference type="Gene3D" id="1.10.1750.10">
    <property type="match status" value="1"/>
</dbReference>
<dbReference type="Gene3D" id="1.10.8.60">
    <property type="match status" value="1"/>
</dbReference>
<dbReference type="Gene3D" id="3.30.300.180">
    <property type="match status" value="1"/>
</dbReference>
<dbReference type="Gene3D" id="3.40.50.300">
    <property type="entry name" value="P-loop containing nucleotide triphosphate hydrolases"/>
    <property type="match status" value="1"/>
</dbReference>
<dbReference type="HAMAP" id="MF_00377">
    <property type="entry name" value="DnaA_bact"/>
    <property type="match status" value="1"/>
</dbReference>
<dbReference type="InterPro" id="IPR003593">
    <property type="entry name" value="AAA+_ATPase"/>
</dbReference>
<dbReference type="InterPro" id="IPR001957">
    <property type="entry name" value="Chromosome_initiator_DnaA"/>
</dbReference>
<dbReference type="InterPro" id="IPR020591">
    <property type="entry name" value="Chromosome_initiator_DnaA-like"/>
</dbReference>
<dbReference type="InterPro" id="IPR018312">
    <property type="entry name" value="Chromosome_initiator_DnaA_CS"/>
</dbReference>
<dbReference type="InterPro" id="IPR013159">
    <property type="entry name" value="DnaA_C"/>
</dbReference>
<dbReference type="InterPro" id="IPR013317">
    <property type="entry name" value="DnaA_dom"/>
</dbReference>
<dbReference type="InterPro" id="IPR024633">
    <property type="entry name" value="DnaA_N_dom"/>
</dbReference>
<dbReference type="InterPro" id="IPR038454">
    <property type="entry name" value="DnaA_N_sf"/>
</dbReference>
<dbReference type="InterPro" id="IPR055199">
    <property type="entry name" value="Hda_lid"/>
</dbReference>
<dbReference type="InterPro" id="IPR027417">
    <property type="entry name" value="P-loop_NTPase"/>
</dbReference>
<dbReference type="InterPro" id="IPR010921">
    <property type="entry name" value="Trp_repressor/repl_initiator"/>
</dbReference>
<dbReference type="NCBIfam" id="TIGR00362">
    <property type="entry name" value="DnaA"/>
    <property type="match status" value="1"/>
</dbReference>
<dbReference type="PANTHER" id="PTHR30050">
    <property type="entry name" value="CHROMOSOMAL REPLICATION INITIATOR PROTEIN DNAA"/>
    <property type="match status" value="1"/>
</dbReference>
<dbReference type="PANTHER" id="PTHR30050:SF2">
    <property type="entry name" value="CHROMOSOMAL REPLICATION INITIATOR PROTEIN DNAA"/>
    <property type="match status" value="1"/>
</dbReference>
<dbReference type="Pfam" id="PF00308">
    <property type="entry name" value="Bac_DnaA"/>
    <property type="match status" value="1"/>
</dbReference>
<dbReference type="Pfam" id="PF08299">
    <property type="entry name" value="Bac_DnaA_C"/>
    <property type="match status" value="1"/>
</dbReference>
<dbReference type="Pfam" id="PF11638">
    <property type="entry name" value="DnaA_N"/>
    <property type="match status" value="1"/>
</dbReference>
<dbReference type="Pfam" id="PF22688">
    <property type="entry name" value="Hda_lid"/>
    <property type="match status" value="1"/>
</dbReference>
<dbReference type="PRINTS" id="PR00051">
    <property type="entry name" value="DNAA"/>
</dbReference>
<dbReference type="SMART" id="SM00382">
    <property type="entry name" value="AAA"/>
    <property type="match status" value="1"/>
</dbReference>
<dbReference type="SMART" id="SM00760">
    <property type="entry name" value="Bac_DnaA_C"/>
    <property type="match status" value="1"/>
</dbReference>
<dbReference type="SUPFAM" id="SSF52540">
    <property type="entry name" value="P-loop containing nucleoside triphosphate hydrolases"/>
    <property type="match status" value="1"/>
</dbReference>
<dbReference type="SUPFAM" id="SSF48295">
    <property type="entry name" value="TrpR-like"/>
    <property type="match status" value="1"/>
</dbReference>
<dbReference type="PROSITE" id="PS01008">
    <property type="entry name" value="DNAA"/>
    <property type="match status" value="1"/>
</dbReference>
<protein>
    <recommendedName>
        <fullName evidence="1">Chromosomal replication initiator protein DnaA</fullName>
    </recommendedName>
</protein>
<reference key="1">
    <citation type="journal article" date="2002" name="J. Bacteriol.">
        <title>Genetic organization of the Vibrio harveyi dnaA gene region and analysis of the function of the V. harveyi DnaA protein in Escherichia coli.</title>
        <authorList>
            <person name="Berenstein D."/>
            <person name="Olesen K."/>
            <person name="Speck C."/>
            <person name="Skovgaard O."/>
        </authorList>
    </citation>
    <scope>NUCLEOTIDE SEQUENCE [GENOMIC DNA]</scope>
    <scope>FUNCTION</scope>
    <scope>INDUCTION</scope>
    <source>
        <strain>ATCC 33843 / NCIMB 1871 / 392 / MAV</strain>
    </source>
</reference>
<keyword id="KW-0067">ATP-binding</keyword>
<keyword id="KW-0963">Cytoplasm</keyword>
<keyword id="KW-0235">DNA replication</keyword>
<keyword id="KW-0238">DNA-binding</keyword>
<keyword id="KW-0446">Lipid-binding</keyword>
<keyword id="KW-0547">Nucleotide-binding</keyword>
<keyword id="KW-0678">Repressor</keyword>
<keyword id="KW-0804">Transcription</keyword>
<keyword id="KW-0805">Transcription regulation</keyword>
<sequence length="468" mass="53077">MSSSLWLQCLQQLQEELPATEFSMWVRPLQAELNDNTLTLFAPNRFVLDWVRDKYLNSINRLLQEYCGNDVPSLRFEVGSRRVAAPKPAPTRTPADVAAESSAPAQLQARKPVHKTWDDDAQVIADINHRSNVNPKHKFNNFVEGKSNQLGLAAARQVSDNPGAAYNPLFLYGGTGLGKTHLLHAVGNAIVDNNPNAKVVYMHSERFVQDMVKALQNNAIEEFKRYYRSVDALLIDDIQFFANKERSQEEFFHTFNALLEGNQQIILTSDRYPKEISGVEDRLKSRFGWGLTVAIEPPELETRVAILMKKAEDHQIHLADEVAFFIAKRLRSNVRELEGALNRVIANANFTGRPITIDFVREALRDLLALQEKLVTIDNIQKTVAEYYKIKVADLLSKRRSRSVARPRQLAMALAKELTNHSLPEIGDAFGGRDHTTVLHACRKIEQLREESHDIKEDYSNLIRTLSS</sequence>
<accession>P49996</accession>
<name>DNAA_VIBHA</name>
<comment type="function">
    <text evidence="1">Plays an essential role in the initiation and regulation of chromosomal replication. ATP-DnaA binds to the origin of replication (oriC) to initiate formation of the DNA replication initiation complex once per cell cycle. Binds the DnaA box (a 9 base pair repeat at the origin) and separates the double-stranded (ds)DNA. Forms a right-handed helical filament on oriC DNA; dsDNA binds to the exterior of the filament while single-stranded (ss)DNA is stabiized in the filament's interior. The ATP-DnaA-oriC complex binds and stabilizes one strand of the AT-rich DNA unwinding element (DUE), permitting loading of DNA polymerase. After initiation quickly degrades to an ADP-DnaA complex that is not apt for DNA replication. Binds acidic phospholipids.</text>
</comment>
<comment type="function">
    <text evidence="3">Complements a temperature-sensitive E.coli mutant, the DnaA consensus is 5'-TT(A/T)TNCACA-3' (PubMed:11948168).</text>
</comment>
<comment type="subunit">
    <text evidence="1">Oligomerizes as a right-handed, spiral filament on DNA at oriC.</text>
</comment>
<comment type="subcellular location">
    <subcellularLocation>
        <location evidence="1">Cytoplasm</location>
    </subcellularLocation>
</comment>
<comment type="induction">
    <text evidence="3">Represses its own transcription (PubMed:11948168).</text>
</comment>
<comment type="domain">
    <text evidence="1">Domain I is involved in oligomerization and binding regulators, domain II is flexibile and of varying length in different bacteria, domain III forms the AAA+ region, while domain IV binds dsDNA.</text>
</comment>
<comment type="similarity">
    <text evidence="1">Belongs to the DnaA family.</text>
</comment>